<gene>
    <name evidence="1" type="primary">thiI</name>
    <name type="ordered locus">SeAg_B0464</name>
</gene>
<protein>
    <recommendedName>
        <fullName evidence="1">tRNA sulfurtransferase</fullName>
        <ecNumber evidence="1">2.8.1.4</ecNumber>
    </recommendedName>
    <alternativeName>
        <fullName evidence="1">Sulfur carrier protein ThiS sulfurtransferase</fullName>
    </alternativeName>
    <alternativeName>
        <fullName evidence="1">Thiamine biosynthesis protein ThiI</fullName>
    </alternativeName>
    <alternativeName>
        <fullName evidence="1">tRNA 4-thiouridine synthase</fullName>
    </alternativeName>
</protein>
<comment type="function">
    <text evidence="1">Catalyzes the ATP-dependent transfer of a sulfur to tRNA to produce 4-thiouridine in position 8 of tRNAs, which functions as a near-UV photosensor. Also catalyzes the transfer of sulfur to the sulfur carrier protein ThiS, forming ThiS-thiocarboxylate. This is a step in the synthesis of thiazole, in the thiamine biosynthesis pathway. The sulfur is donated as persulfide by IscS.</text>
</comment>
<comment type="catalytic activity">
    <reaction evidence="1">
        <text>[ThiI sulfur-carrier protein]-S-sulfanyl-L-cysteine + a uridine in tRNA + 2 reduced [2Fe-2S]-[ferredoxin] + ATP + H(+) = [ThiI sulfur-carrier protein]-L-cysteine + a 4-thiouridine in tRNA + 2 oxidized [2Fe-2S]-[ferredoxin] + AMP + diphosphate</text>
        <dbReference type="Rhea" id="RHEA:24176"/>
        <dbReference type="Rhea" id="RHEA-COMP:10000"/>
        <dbReference type="Rhea" id="RHEA-COMP:10001"/>
        <dbReference type="Rhea" id="RHEA-COMP:13337"/>
        <dbReference type="Rhea" id="RHEA-COMP:13338"/>
        <dbReference type="Rhea" id="RHEA-COMP:13339"/>
        <dbReference type="Rhea" id="RHEA-COMP:13340"/>
        <dbReference type="ChEBI" id="CHEBI:15378"/>
        <dbReference type="ChEBI" id="CHEBI:29950"/>
        <dbReference type="ChEBI" id="CHEBI:30616"/>
        <dbReference type="ChEBI" id="CHEBI:33019"/>
        <dbReference type="ChEBI" id="CHEBI:33737"/>
        <dbReference type="ChEBI" id="CHEBI:33738"/>
        <dbReference type="ChEBI" id="CHEBI:61963"/>
        <dbReference type="ChEBI" id="CHEBI:65315"/>
        <dbReference type="ChEBI" id="CHEBI:136798"/>
        <dbReference type="ChEBI" id="CHEBI:456215"/>
        <dbReference type="EC" id="2.8.1.4"/>
    </reaction>
</comment>
<comment type="catalytic activity">
    <reaction evidence="1">
        <text>[ThiS sulfur-carrier protein]-C-terminal Gly-Gly-AMP + S-sulfanyl-L-cysteinyl-[cysteine desulfurase] + AH2 = [ThiS sulfur-carrier protein]-C-terminal-Gly-aminoethanethioate + L-cysteinyl-[cysteine desulfurase] + A + AMP + 2 H(+)</text>
        <dbReference type="Rhea" id="RHEA:43340"/>
        <dbReference type="Rhea" id="RHEA-COMP:12157"/>
        <dbReference type="Rhea" id="RHEA-COMP:12158"/>
        <dbReference type="Rhea" id="RHEA-COMP:12910"/>
        <dbReference type="Rhea" id="RHEA-COMP:19908"/>
        <dbReference type="ChEBI" id="CHEBI:13193"/>
        <dbReference type="ChEBI" id="CHEBI:15378"/>
        <dbReference type="ChEBI" id="CHEBI:17499"/>
        <dbReference type="ChEBI" id="CHEBI:29950"/>
        <dbReference type="ChEBI" id="CHEBI:61963"/>
        <dbReference type="ChEBI" id="CHEBI:90618"/>
        <dbReference type="ChEBI" id="CHEBI:232372"/>
        <dbReference type="ChEBI" id="CHEBI:456215"/>
    </reaction>
</comment>
<comment type="pathway">
    <text evidence="1">Cofactor biosynthesis; thiamine diphosphate biosynthesis.</text>
</comment>
<comment type="subcellular location">
    <subcellularLocation>
        <location evidence="1">Cytoplasm</location>
    </subcellularLocation>
</comment>
<comment type="similarity">
    <text evidence="1">Belongs to the ThiI family.</text>
</comment>
<organism>
    <name type="scientific">Salmonella agona (strain SL483)</name>
    <dbReference type="NCBI Taxonomy" id="454166"/>
    <lineage>
        <taxon>Bacteria</taxon>
        <taxon>Pseudomonadati</taxon>
        <taxon>Pseudomonadota</taxon>
        <taxon>Gammaproteobacteria</taxon>
        <taxon>Enterobacterales</taxon>
        <taxon>Enterobacteriaceae</taxon>
        <taxon>Salmonella</taxon>
    </lineage>
</organism>
<keyword id="KW-0067">ATP-binding</keyword>
<keyword id="KW-0963">Cytoplasm</keyword>
<keyword id="KW-1015">Disulfide bond</keyword>
<keyword id="KW-0547">Nucleotide-binding</keyword>
<keyword id="KW-0676">Redox-active center</keyword>
<keyword id="KW-0694">RNA-binding</keyword>
<keyword id="KW-0784">Thiamine biosynthesis</keyword>
<keyword id="KW-0808">Transferase</keyword>
<keyword id="KW-0820">tRNA-binding</keyword>
<feature type="chain" id="PRO_1000090027" description="tRNA sulfurtransferase">
    <location>
        <begin position="1"/>
        <end position="482"/>
    </location>
</feature>
<feature type="domain" description="THUMP" evidence="1">
    <location>
        <begin position="61"/>
        <end position="165"/>
    </location>
</feature>
<feature type="domain" description="Rhodanese" evidence="1">
    <location>
        <begin position="404"/>
        <end position="482"/>
    </location>
</feature>
<feature type="active site" description="Cysteine persulfide intermediate" evidence="1">
    <location>
        <position position="456"/>
    </location>
</feature>
<feature type="binding site" evidence="1">
    <location>
        <begin position="183"/>
        <end position="184"/>
    </location>
    <ligand>
        <name>ATP</name>
        <dbReference type="ChEBI" id="CHEBI:30616"/>
    </ligand>
</feature>
<feature type="binding site" evidence="1">
    <location>
        <position position="265"/>
    </location>
    <ligand>
        <name>ATP</name>
        <dbReference type="ChEBI" id="CHEBI:30616"/>
    </ligand>
</feature>
<feature type="binding site" evidence="1">
    <location>
        <position position="287"/>
    </location>
    <ligand>
        <name>ATP</name>
        <dbReference type="ChEBI" id="CHEBI:30616"/>
    </ligand>
</feature>
<feature type="binding site" evidence="1">
    <location>
        <position position="296"/>
    </location>
    <ligand>
        <name>ATP</name>
        <dbReference type="ChEBI" id="CHEBI:30616"/>
    </ligand>
</feature>
<feature type="disulfide bond" description="Redox-active" evidence="1">
    <location>
        <begin position="344"/>
        <end position="456"/>
    </location>
</feature>
<sequence>MKFIIKLFPEITIKSQSVRLRFIKILTGNIRNVLKHYDETLAVVRHWDNIEVRAKDENQRLAIRDALTRIPGIHHILEVEDVPFTDMHDIFEKALAQYREQLEGKTFCVRVKRRGKHEFSSIEVERYVGGGLNQHIESARVKLTNPDVTVHLEVEDDRLLLIKGRYEGIGGFPIGTQEDVLSLISGGFDSGVSSYMLMRRGCRVHYCFFNLGGAAHEIGVRQVAHYLWNRFGSSHRVRFVAINFEPVVGEILEKVDDGQMGVVLKRMMVRAASKVAERYGVQALVTGEALGQVSSQTLTNLRLIDNVSDTLILRPLISYDKEHIINLARQIGTEDFARTMPEYCGVISKSPTVKAIKAKIEAEEENFDFSILDKVVEEANNVDIREIAQQTQQEVVEVETVSGFGANDVILDIRSVDEQDDKPLKVEGVDVVSLPFYKLSTKFGDLDQSKTWLLWCERGVMSRLQALYLREQGFANVKVYRP</sequence>
<proteinExistence type="inferred from homology"/>
<reference key="1">
    <citation type="journal article" date="2011" name="J. Bacteriol.">
        <title>Comparative genomics of 28 Salmonella enterica isolates: evidence for CRISPR-mediated adaptive sublineage evolution.</title>
        <authorList>
            <person name="Fricke W.F."/>
            <person name="Mammel M.K."/>
            <person name="McDermott P.F."/>
            <person name="Tartera C."/>
            <person name="White D.G."/>
            <person name="Leclerc J.E."/>
            <person name="Ravel J."/>
            <person name="Cebula T.A."/>
        </authorList>
    </citation>
    <scope>NUCLEOTIDE SEQUENCE [LARGE SCALE GENOMIC DNA]</scope>
    <source>
        <strain>SL483</strain>
    </source>
</reference>
<accession>B5EXG6</accession>
<dbReference type="EC" id="2.8.1.4" evidence="1"/>
<dbReference type="EMBL" id="CP001138">
    <property type="protein sequence ID" value="ACH51661.1"/>
    <property type="molecule type" value="Genomic_DNA"/>
</dbReference>
<dbReference type="RefSeq" id="WP_000668648.1">
    <property type="nucleotide sequence ID" value="NC_011149.1"/>
</dbReference>
<dbReference type="SMR" id="B5EXG6"/>
<dbReference type="KEGG" id="sea:SeAg_B0464"/>
<dbReference type="HOGENOM" id="CLU_037952_4_1_6"/>
<dbReference type="UniPathway" id="UPA00060"/>
<dbReference type="Proteomes" id="UP000008819">
    <property type="component" value="Chromosome"/>
</dbReference>
<dbReference type="GO" id="GO:0005829">
    <property type="term" value="C:cytosol"/>
    <property type="evidence" value="ECO:0007669"/>
    <property type="project" value="TreeGrafter"/>
</dbReference>
<dbReference type="GO" id="GO:0005524">
    <property type="term" value="F:ATP binding"/>
    <property type="evidence" value="ECO:0007669"/>
    <property type="project" value="UniProtKB-UniRule"/>
</dbReference>
<dbReference type="GO" id="GO:0004810">
    <property type="term" value="F:CCA tRNA nucleotidyltransferase activity"/>
    <property type="evidence" value="ECO:0007669"/>
    <property type="project" value="InterPro"/>
</dbReference>
<dbReference type="GO" id="GO:0000049">
    <property type="term" value="F:tRNA binding"/>
    <property type="evidence" value="ECO:0007669"/>
    <property type="project" value="UniProtKB-UniRule"/>
</dbReference>
<dbReference type="GO" id="GO:0140741">
    <property type="term" value="F:tRNA-uracil-4 sulfurtransferase activity"/>
    <property type="evidence" value="ECO:0007669"/>
    <property type="project" value="UniProtKB-EC"/>
</dbReference>
<dbReference type="GO" id="GO:0009228">
    <property type="term" value="P:thiamine biosynthetic process"/>
    <property type="evidence" value="ECO:0007669"/>
    <property type="project" value="UniProtKB-KW"/>
</dbReference>
<dbReference type="GO" id="GO:0009229">
    <property type="term" value="P:thiamine diphosphate biosynthetic process"/>
    <property type="evidence" value="ECO:0007669"/>
    <property type="project" value="UniProtKB-UniRule"/>
</dbReference>
<dbReference type="GO" id="GO:0052837">
    <property type="term" value="P:thiazole biosynthetic process"/>
    <property type="evidence" value="ECO:0007669"/>
    <property type="project" value="InterPro"/>
</dbReference>
<dbReference type="GO" id="GO:0002937">
    <property type="term" value="P:tRNA 4-thiouridine biosynthesis"/>
    <property type="evidence" value="ECO:0007669"/>
    <property type="project" value="TreeGrafter"/>
</dbReference>
<dbReference type="CDD" id="cd01712">
    <property type="entry name" value="PPase_ThiI"/>
    <property type="match status" value="1"/>
</dbReference>
<dbReference type="CDD" id="cd00158">
    <property type="entry name" value="RHOD"/>
    <property type="match status" value="1"/>
</dbReference>
<dbReference type="CDD" id="cd11716">
    <property type="entry name" value="THUMP_ThiI"/>
    <property type="match status" value="1"/>
</dbReference>
<dbReference type="FunFam" id="3.30.2130.30:FF:000002">
    <property type="entry name" value="tRNA sulfurtransferase"/>
    <property type="match status" value="1"/>
</dbReference>
<dbReference type="FunFam" id="3.40.250.10:FF:000003">
    <property type="entry name" value="tRNA sulfurtransferase"/>
    <property type="match status" value="1"/>
</dbReference>
<dbReference type="FunFam" id="3.40.50.620:FF:000029">
    <property type="entry name" value="tRNA sulfurtransferase"/>
    <property type="match status" value="1"/>
</dbReference>
<dbReference type="Gene3D" id="3.30.2130.30">
    <property type="match status" value="1"/>
</dbReference>
<dbReference type="Gene3D" id="3.40.50.620">
    <property type="entry name" value="HUPs"/>
    <property type="match status" value="1"/>
</dbReference>
<dbReference type="Gene3D" id="3.40.250.10">
    <property type="entry name" value="Rhodanese-like domain"/>
    <property type="match status" value="1"/>
</dbReference>
<dbReference type="HAMAP" id="MF_00021">
    <property type="entry name" value="ThiI"/>
    <property type="match status" value="1"/>
</dbReference>
<dbReference type="InterPro" id="IPR001763">
    <property type="entry name" value="Rhodanese-like_dom"/>
</dbReference>
<dbReference type="InterPro" id="IPR036873">
    <property type="entry name" value="Rhodanese-like_dom_sf"/>
</dbReference>
<dbReference type="InterPro" id="IPR014729">
    <property type="entry name" value="Rossmann-like_a/b/a_fold"/>
</dbReference>
<dbReference type="InterPro" id="IPR020536">
    <property type="entry name" value="ThiI_AANH"/>
</dbReference>
<dbReference type="InterPro" id="IPR054173">
    <property type="entry name" value="ThiI_fer"/>
</dbReference>
<dbReference type="InterPro" id="IPR049961">
    <property type="entry name" value="ThiI_N"/>
</dbReference>
<dbReference type="InterPro" id="IPR026340">
    <property type="entry name" value="THII_Thiazole_biosynth_dom"/>
</dbReference>
<dbReference type="InterPro" id="IPR004114">
    <property type="entry name" value="THUMP_dom"/>
</dbReference>
<dbReference type="InterPro" id="IPR049962">
    <property type="entry name" value="THUMP_ThiI"/>
</dbReference>
<dbReference type="InterPro" id="IPR003720">
    <property type="entry name" value="tRNA_STrfase"/>
</dbReference>
<dbReference type="InterPro" id="IPR050102">
    <property type="entry name" value="tRNA_sulfurtransferase_ThiI"/>
</dbReference>
<dbReference type="NCBIfam" id="TIGR04271">
    <property type="entry name" value="ThiI_C_thiazole"/>
    <property type="match status" value="1"/>
</dbReference>
<dbReference type="NCBIfam" id="TIGR00342">
    <property type="entry name" value="tRNA uracil 4-sulfurtransferase ThiI"/>
    <property type="match status" value="1"/>
</dbReference>
<dbReference type="PANTHER" id="PTHR43209">
    <property type="entry name" value="TRNA SULFURTRANSFERASE"/>
    <property type="match status" value="1"/>
</dbReference>
<dbReference type="PANTHER" id="PTHR43209:SF1">
    <property type="entry name" value="TRNA SULFURTRANSFERASE"/>
    <property type="match status" value="1"/>
</dbReference>
<dbReference type="Pfam" id="PF02568">
    <property type="entry name" value="ThiI"/>
    <property type="match status" value="1"/>
</dbReference>
<dbReference type="Pfam" id="PF22025">
    <property type="entry name" value="ThiI_fer"/>
    <property type="match status" value="1"/>
</dbReference>
<dbReference type="Pfam" id="PF02926">
    <property type="entry name" value="THUMP"/>
    <property type="match status" value="1"/>
</dbReference>
<dbReference type="SMART" id="SM00981">
    <property type="entry name" value="THUMP"/>
    <property type="match status" value="1"/>
</dbReference>
<dbReference type="SUPFAM" id="SSF52402">
    <property type="entry name" value="Adenine nucleotide alpha hydrolases-like"/>
    <property type="match status" value="1"/>
</dbReference>
<dbReference type="SUPFAM" id="SSF52821">
    <property type="entry name" value="Rhodanese/Cell cycle control phosphatase"/>
    <property type="match status" value="1"/>
</dbReference>
<dbReference type="SUPFAM" id="SSF143437">
    <property type="entry name" value="THUMP domain-like"/>
    <property type="match status" value="1"/>
</dbReference>
<dbReference type="PROSITE" id="PS50206">
    <property type="entry name" value="RHODANESE_3"/>
    <property type="match status" value="1"/>
</dbReference>
<dbReference type="PROSITE" id="PS51165">
    <property type="entry name" value="THUMP"/>
    <property type="match status" value="1"/>
</dbReference>
<name>THII_SALA4</name>
<evidence type="ECO:0000255" key="1">
    <source>
        <dbReference type="HAMAP-Rule" id="MF_00021"/>
    </source>
</evidence>